<keyword id="KW-0963">Cytoplasm</keyword>
<keyword id="KW-0479">Metal-binding</keyword>
<keyword id="KW-0520">NAD</keyword>
<keyword id="KW-0521">NADP</keyword>
<keyword id="KW-0560">Oxidoreductase</keyword>
<keyword id="KW-0664">Pyridoxine biosynthesis</keyword>
<keyword id="KW-1185">Reference proteome</keyword>
<accession>Q55982</accession>
<sequence>MDCMSLPRLILTLGDPAGIGPEVVLKALAEPGLASICQLTAIGSRSVLDQTRRQLLAQNPGLNLADPETINLLEVDLSYLGKITVGQGDAVSGAISFAYLNEAITRTLAGEFDAIVTAPIAKSAWQAAGHNYPGQTEVLAHRAGVESFAMAFVGRSPFTGWTLRTLLATTHIPLKEVPQALTPQLMTAKLELLLTCLAQDFGISNPSVAIAGLNPHSGEEGKLGSEEQDWLIPWLEQARKKYPQAQLIGPIPPDTMWVGPGKAWLTDGQTTVSDAYLALYHDQGLIPVKLLAFDQAINTTIGLPFVRTSPDHGTAFDIAGQGIARADSLIAAIKLAAELVEQRCRPRAQ</sequence>
<gene>
    <name evidence="1" type="primary">pdxA</name>
    <name type="ordered locus">sll0660</name>
</gene>
<protein>
    <recommendedName>
        <fullName evidence="1">4-hydroxythreonine-4-phosphate dehydrogenase</fullName>
        <ecNumber evidence="1">1.1.1.262</ecNumber>
    </recommendedName>
    <alternativeName>
        <fullName evidence="1">4-(phosphohydroxy)-L-threonine dehydrogenase</fullName>
    </alternativeName>
</protein>
<comment type="function">
    <text evidence="1">Catalyzes the NAD(P)-dependent oxidation of 4-(phosphooxy)-L-threonine (HTP) into 2-amino-3-oxo-4-(phosphooxy)butyric acid which spontaneously decarboxylates to form 3-amino-2-oxopropyl phosphate (AHAP).</text>
</comment>
<comment type="catalytic activity">
    <reaction evidence="1">
        <text>4-(phosphooxy)-L-threonine + NAD(+) = 3-amino-2-oxopropyl phosphate + CO2 + NADH</text>
        <dbReference type="Rhea" id="RHEA:32275"/>
        <dbReference type="ChEBI" id="CHEBI:16526"/>
        <dbReference type="ChEBI" id="CHEBI:57279"/>
        <dbReference type="ChEBI" id="CHEBI:57540"/>
        <dbReference type="ChEBI" id="CHEBI:57945"/>
        <dbReference type="ChEBI" id="CHEBI:58452"/>
        <dbReference type="EC" id="1.1.1.262"/>
    </reaction>
</comment>
<comment type="cofactor">
    <cofactor evidence="1">
        <name>a divalent metal cation</name>
        <dbReference type="ChEBI" id="CHEBI:60240"/>
    </cofactor>
    <text evidence="1">Binds 1 divalent metal cation per subunit.</text>
</comment>
<comment type="pathway">
    <text evidence="1">Cofactor biosynthesis; pyridoxine 5'-phosphate biosynthesis; pyridoxine 5'-phosphate from D-erythrose 4-phosphate: step 4/5.</text>
</comment>
<comment type="subunit">
    <text evidence="1">Homodimer.</text>
</comment>
<comment type="subcellular location">
    <subcellularLocation>
        <location evidence="1">Cytoplasm</location>
    </subcellularLocation>
</comment>
<comment type="miscellaneous">
    <text evidence="1">The active site is located at the dimer interface.</text>
</comment>
<comment type="similarity">
    <text evidence="1">Belongs to the PdxA family.</text>
</comment>
<organism>
    <name type="scientific">Synechocystis sp. (strain ATCC 27184 / PCC 6803 / Kazusa)</name>
    <dbReference type="NCBI Taxonomy" id="1111708"/>
    <lineage>
        <taxon>Bacteria</taxon>
        <taxon>Bacillati</taxon>
        <taxon>Cyanobacteriota</taxon>
        <taxon>Cyanophyceae</taxon>
        <taxon>Synechococcales</taxon>
        <taxon>Merismopediaceae</taxon>
        <taxon>Synechocystis</taxon>
    </lineage>
</organism>
<feature type="chain" id="PRO_0000188832" description="4-hydroxythreonine-4-phosphate dehydrogenase">
    <location>
        <begin position="1"/>
        <end position="349"/>
    </location>
</feature>
<feature type="binding site" evidence="1">
    <location>
        <position position="136"/>
    </location>
    <ligand>
        <name>substrate</name>
    </ligand>
</feature>
<feature type="binding site" evidence="1">
    <location>
        <position position="171"/>
    </location>
    <ligand>
        <name>a divalent metal cation</name>
        <dbReference type="ChEBI" id="CHEBI:60240"/>
        <note>ligand shared between dimeric partners</note>
    </ligand>
</feature>
<feature type="binding site" evidence="1">
    <location>
        <position position="216"/>
    </location>
    <ligand>
        <name>a divalent metal cation</name>
        <dbReference type="ChEBI" id="CHEBI:60240"/>
        <note>ligand shared between dimeric partners</note>
    </ligand>
</feature>
<feature type="binding site" evidence="1">
    <location>
        <position position="281"/>
    </location>
    <ligand>
        <name>a divalent metal cation</name>
        <dbReference type="ChEBI" id="CHEBI:60240"/>
        <note>ligand shared between dimeric partners</note>
    </ligand>
</feature>
<feature type="binding site" evidence="1">
    <location>
        <position position="289"/>
    </location>
    <ligand>
        <name>substrate</name>
    </ligand>
</feature>
<feature type="binding site" evidence="1">
    <location>
        <position position="298"/>
    </location>
    <ligand>
        <name>substrate</name>
    </ligand>
</feature>
<feature type="binding site" evidence="1">
    <location>
        <position position="307"/>
    </location>
    <ligand>
        <name>substrate</name>
    </ligand>
</feature>
<evidence type="ECO:0000255" key="1">
    <source>
        <dbReference type="HAMAP-Rule" id="MF_00536"/>
    </source>
</evidence>
<reference key="1">
    <citation type="journal article" date="1995" name="DNA Res.">
        <title>Sequence analysis of the genome of the unicellular cyanobacterium Synechocystis sp. strain PCC6803. I. Sequence features in the 1 Mb region from map positions 64% to 92% of the genome.</title>
        <authorList>
            <person name="Kaneko T."/>
            <person name="Tanaka A."/>
            <person name="Sato S."/>
            <person name="Kotani H."/>
            <person name="Sazuka T."/>
            <person name="Miyajima N."/>
            <person name="Sugiura M."/>
            <person name="Tabata S."/>
        </authorList>
    </citation>
    <scope>NUCLEOTIDE SEQUENCE [LARGE SCALE GENOMIC DNA]</scope>
    <source>
        <strain>ATCC 27184 / PCC 6803 / N-1</strain>
    </source>
</reference>
<reference key="2">
    <citation type="journal article" date="1996" name="DNA Res.">
        <title>Sequence analysis of the genome of the unicellular cyanobacterium Synechocystis sp. strain PCC6803. II. Sequence determination of the entire genome and assignment of potential protein-coding regions.</title>
        <authorList>
            <person name="Kaneko T."/>
            <person name="Sato S."/>
            <person name="Kotani H."/>
            <person name="Tanaka A."/>
            <person name="Asamizu E."/>
            <person name="Nakamura Y."/>
            <person name="Miyajima N."/>
            <person name="Hirosawa M."/>
            <person name="Sugiura M."/>
            <person name="Sasamoto S."/>
            <person name="Kimura T."/>
            <person name="Hosouchi T."/>
            <person name="Matsuno A."/>
            <person name="Muraki A."/>
            <person name="Nakazaki N."/>
            <person name="Naruo K."/>
            <person name="Okumura S."/>
            <person name="Shimpo S."/>
            <person name="Takeuchi C."/>
            <person name="Wada T."/>
            <person name="Watanabe A."/>
            <person name="Yamada M."/>
            <person name="Yasuda M."/>
            <person name="Tabata S."/>
        </authorList>
    </citation>
    <scope>NUCLEOTIDE SEQUENCE [LARGE SCALE GENOMIC DNA]</scope>
    <source>
        <strain>ATCC 27184 / PCC 6803 / Kazusa</strain>
    </source>
</reference>
<name>PDXA_SYNY3</name>
<proteinExistence type="inferred from homology"/>
<dbReference type="EC" id="1.1.1.262" evidence="1"/>
<dbReference type="EMBL" id="BA000022">
    <property type="protein sequence ID" value="BAA10762.1"/>
    <property type="molecule type" value="Genomic_DNA"/>
</dbReference>
<dbReference type="PIR" id="S77070">
    <property type="entry name" value="S77070"/>
</dbReference>
<dbReference type="SMR" id="Q55982"/>
<dbReference type="STRING" id="1148.gene:10500266"/>
<dbReference type="PaxDb" id="1148-1006608"/>
<dbReference type="EnsemblBacteria" id="BAA10762">
    <property type="protein sequence ID" value="BAA10762"/>
    <property type="gene ID" value="BAA10762"/>
</dbReference>
<dbReference type="KEGG" id="syn:sll0660"/>
<dbReference type="eggNOG" id="COG1995">
    <property type="taxonomic scope" value="Bacteria"/>
</dbReference>
<dbReference type="InParanoid" id="Q55982"/>
<dbReference type="PhylomeDB" id="Q55982"/>
<dbReference type="UniPathway" id="UPA00244">
    <property type="reaction ID" value="UER00312"/>
</dbReference>
<dbReference type="Proteomes" id="UP000001425">
    <property type="component" value="Chromosome"/>
</dbReference>
<dbReference type="GO" id="GO:0005737">
    <property type="term" value="C:cytoplasm"/>
    <property type="evidence" value="ECO:0007669"/>
    <property type="project" value="UniProtKB-SubCell"/>
</dbReference>
<dbReference type="GO" id="GO:0050570">
    <property type="term" value="F:4-hydroxythreonine-4-phosphate dehydrogenase activity"/>
    <property type="evidence" value="ECO:0007669"/>
    <property type="project" value="UniProtKB-UniRule"/>
</dbReference>
<dbReference type="GO" id="GO:0046872">
    <property type="term" value="F:metal ion binding"/>
    <property type="evidence" value="ECO:0007669"/>
    <property type="project" value="UniProtKB-UniRule"/>
</dbReference>
<dbReference type="GO" id="GO:0051287">
    <property type="term" value="F:NAD binding"/>
    <property type="evidence" value="ECO:0007669"/>
    <property type="project" value="InterPro"/>
</dbReference>
<dbReference type="GO" id="GO:0042823">
    <property type="term" value="P:pyridoxal phosphate biosynthetic process"/>
    <property type="evidence" value="ECO:0007669"/>
    <property type="project" value="UniProtKB-UniRule"/>
</dbReference>
<dbReference type="GO" id="GO:0008615">
    <property type="term" value="P:pyridoxine biosynthetic process"/>
    <property type="evidence" value="ECO:0007669"/>
    <property type="project" value="UniProtKB-UniRule"/>
</dbReference>
<dbReference type="Gene3D" id="3.40.718.10">
    <property type="entry name" value="Isopropylmalate Dehydrogenase"/>
    <property type="match status" value="1"/>
</dbReference>
<dbReference type="HAMAP" id="MF_00536">
    <property type="entry name" value="PdxA"/>
    <property type="match status" value="1"/>
</dbReference>
<dbReference type="InterPro" id="IPR037510">
    <property type="entry name" value="PdxA"/>
</dbReference>
<dbReference type="InterPro" id="IPR005255">
    <property type="entry name" value="PdxA_fam"/>
</dbReference>
<dbReference type="NCBIfam" id="TIGR00557">
    <property type="entry name" value="pdxA"/>
    <property type="match status" value="1"/>
</dbReference>
<dbReference type="NCBIfam" id="NF002744">
    <property type="entry name" value="PRK02746.1"/>
    <property type="match status" value="1"/>
</dbReference>
<dbReference type="PANTHER" id="PTHR30004">
    <property type="entry name" value="4-HYDROXYTHREONINE-4-PHOSPHATE DEHYDROGENASE"/>
    <property type="match status" value="1"/>
</dbReference>
<dbReference type="PANTHER" id="PTHR30004:SF6">
    <property type="entry name" value="D-THREONATE 4-PHOSPHATE DEHYDROGENASE"/>
    <property type="match status" value="1"/>
</dbReference>
<dbReference type="Pfam" id="PF04166">
    <property type="entry name" value="PdxA"/>
    <property type="match status" value="1"/>
</dbReference>
<dbReference type="SUPFAM" id="SSF53659">
    <property type="entry name" value="Isocitrate/Isopropylmalate dehydrogenase-like"/>
    <property type="match status" value="1"/>
</dbReference>